<gene>
    <name evidence="3" type="primary">PBRP2</name>
    <name evidence="4" type="synonym">TFIIB3</name>
    <name evidence="5" type="ordered locus">At3g29380</name>
    <name evidence="6" type="ORF">MUO10.10</name>
</gene>
<sequence length="336" mass="37719">MEEETCLDCKRPTIMVVDHSSGDTICSECGLVLEAHIIEYSQEWRTFASDDNHSDRDPNRVGAATNPFLKSGDLVTIIEKPKETASSVLSKDDISTLFRAHNQVKNHEEDLIKQAFEEIQRMTDALDLDIVINSRACEIVSKYDGHANTKLRRGKKLNAICAASVSTACRELQLSRTLKEIAEVANGVDKKDIRKESLVIKRVLESHQTSVSASQAIINTGELVRRFCSKLDISQREIMAIPEAVEKAENFDIRRNPKSVLAAIIFMISHISQTNRKPIREIGIVAEVVENTIKNSVKDMYPYALKIIPNWYACESDIIKRLDGVITSWDSAKFSV</sequence>
<protein>
    <recommendedName>
        <fullName evidence="3">Plant-specific TFIIB-related protein 2</fullName>
        <shortName evidence="3">AtPBRP2</shortName>
    </recommendedName>
    <alternativeName>
        <fullName evidence="4">TFIIB-related protein PBRP2</fullName>
    </alternativeName>
</protein>
<accession>Q9LIA6</accession>
<accession>Q6S7A3</accession>
<reference key="1">
    <citation type="submission" date="2003-11" db="EMBL/GenBank/DDBJ databases">
        <title>Binary protein-protein interactions of Arabidopsis thaliana general transcription factors TFIIa, TFIIb, TFIId, TFIIe, and TFIIf.</title>
        <authorList>
            <person name="Lawit S.J."/>
            <person name="Gurley W.B."/>
        </authorList>
    </citation>
    <scope>NUCLEOTIDE SEQUENCE [MRNA]</scope>
    <source>
        <strain>cv. Columbia</strain>
    </source>
</reference>
<reference key="2">
    <citation type="journal article" date="2000" name="DNA Res.">
        <title>Structural analysis of Arabidopsis thaliana chromosome 3. II. Sequence features of the 4,251,695 bp regions covered by 90 P1, TAC and BAC clones.</title>
        <authorList>
            <person name="Kaneko T."/>
            <person name="Katoh T."/>
            <person name="Sato S."/>
            <person name="Nakamura Y."/>
            <person name="Asamizu E."/>
            <person name="Tabata S."/>
        </authorList>
    </citation>
    <scope>NUCLEOTIDE SEQUENCE [LARGE SCALE GENOMIC DNA]</scope>
    <source>
        <strain>cv. Columbia</strain>
    </source>
</reference>
<reference key="3">
    <citation type="journal article" date="2017" name="Plant J.">
        <title>Araport11: a complete reannotation of the Arabidopsis thaliana reference genome.</title>
        <authorList>
            <person name="Cheng C.Y."/>
            <person name="Krishnakumar V."/>
            <person name="Chan A.P."/>
            <person name="Thibaud-Nissen F."/>
            <person name="Schobel S."/>
            <person name="Town C.D."/>
        </authorList>
    </citation>
    <scope>GENOME REANNOTATION</scope>
    <source>
        <strain>cv. Columbia</strain>
    </source>
</reference>
<reference key="4">
    <citation type="journal article" date="2011" name="PLoS ONE">
        <title>A plant-specific transcription factor IIB-related protein, pBRP2, is involved in endosperm growth control.</title>
        <authorList>
            <person name="Cavel E."/>
            <person name="Pillot M."/>
            <person name="Pontier D."/>
            <person name="Lahmy S."/>
            <person name="Bies-Etheve N."/>
            <person name="Vega D."/>
            <person name="Grimanelli D."/>
            <person name="Lagrange T."/>
        </authorList>
    </citation>
    <scope>FUNCTION</scope>
    <scope>SUBCELLULAR LOCATION</scope>
    <scope>TISSUE SPECIFICITY</scope>
    <scope>DISRUPTION PHENOTYPE</scope>
</reference>
<organism>
    <name type="scientific">Arabidopsis thaliana</name>
    <name type="common">Mouse-ear cress</name>
    <dbReference type="NCBI Taxonomy" id="3702"/>
    <lineage>
        <taxon>Eukaryota</taxon>
        <taxon>Viridiplantae</taxon>
        <taxon>Streptophyta</taxon>
        <taxon>Embryophyta</taxon>
        <taxon>Tracheophyta</taxon>
        <taxon>Spermatophyta</taxon>
        <taxon>Magnoliopsida</taxon>
        <taxon>eudicotyledons</taxon>
        <taxon>Gunneridae</taxon>
        <taxon>Pentapetalae</taxon>
        <taxon>rosids</taxon>
        <taxon>malvids</taxon>
        <taxon>Brassicales</taxon>
        <taxon>Brassicaceae</taxon>
        <taxon>Camelineae</taxon>
        <taxon>Arabidopsis</taxon>
    </lineage>
</organism>
<feature type="chain" id="PRO_0000436815" description="Plant-specific TFIIB-related protein 2">
    <location>
        <begin position="1"/>
        <end position="336"/>
    </location>
</feature>
<feature type="zinc finger region" description="TFIIB-type" evidence="1">
    <location>
        <begin position="2"/>
        <end position="34"/>
    </location>
</feature>
<feature type="binding site" evidence="1">
    <location>
        <position position="6"/>
    </location>
    <ligand>
        <name>Zn(2+)</name>
        <dbReference type="ChEBI" id="CHEBI:29105"/>
    </ligand>
</feature>
<feature type="binding site" evidence="1">
    <location>
        <position position="9"/>
    </location>
    <ligand>
        <name>Zn(2+)</name>
        <dbReference type="ChEBI" id="CHEBI:29105"/>
    </ligand>
</feature>
<feature type="binding site" evidence="1">
    <location>
        <position position="26"/>
    </location>
    <ligand>
        <name>Zn(2+)</name>
        <dbReference type="ChEBI" id="CHEBI:29105"/>
    </ligand>
</feature>
<feature type="binding site" evidence="1">
    <location>
        <position position="29"/>
    </location>
    <ligand>
        <name>Zn(2+)</name>
        <dbReference type="ChEBI" id="CHEBI:29105"/>
    </ligand>
</feature>
<feature type="sequence conflict" description="In Ref. 1; AAR28031." evidence="4" ref="1">
    <original>E</original>
    <variation>D</variation>
    <location>
        <position position="222"/>
    </location>
</feature>
<name>PBRP2_ARATH</name>
<dbReference type="EMBL" id="AY463629">
    <property type="protein sequence ID" value="AAR28031.1"/>
    <property type="molecule type" value="mRNA"/>
</dbReference>
<dbReference type="EMBL" id="AP001309">
    <property type="protein sequence ID" value="BAB02583.1"/>
    <property type="molecule type" value="Genomic_DNA"/>
</dbReference>
<dbReference type="EMBL" id="CP002686">
    <property type="protein sequence ID" value="AEE77578.1"/>
    <property type="molecule type" value="Genomic_DNA"/>
</dbReference>
<dbReference type="RefSeq" id="NP_189584.1">
    <property type="nucleotide sequence ID" value="NM_113864.1"/>
</dbReference>
<dbReference type="SMR" id="Q9LIA6"/>
<dbReference type="FunCoup" id="Q9LIA6">
    <property type="interactions" value="650"/>
</dbReference>
<dbReference type="STRING" id="3702.Q9LIA6"/>
<dbReference type="iPTMnet" id="Q9LIA6"/>
<dbReference type="PaxDb" id="3702-AT3G29380.1"/>
<dbReference type="EnsemblPlants" id="AT3G29380.1">
    <property type="protein sequence ID" value="AT3G29380.1"/>
    <property type="gene ID" value="AT3G29380"/>
</dbReference>
<dbReference type="GeneID" id="822598"/>
<dbReference type="Gramene" id="AT3G29380.1">
    <property type="protein sequence ID" value="AT3G29380.1"/>
    <property type="gene ID" value="AT3G29380"/>
</dbReference>
<dbReference type="KEGG" id="ath:AT3G29380"/>
<dbReference type="Araport" id="AT3G29380"/>
<dbReference type="TAIR" id="AT3G29380">
    <property type="gene designation" value="PBRP2"/>
</dbReference>
<dbReference type="eggNOG" id="KOG1597">
    <property type="taxonomic scope" value="Eukaryota"/>
</dbReference>
<dbReference type="HOGENOM" id="CLU_043736_1_1_1"/>
<dbReference type="InParanoid" id="Q9LIA6"/>
<dbReference type="OMA" id="MEFTRAY"/>
<dbReference type="PhylomeDB" id="Q9LIA6"/>
<dbReference type="PRO" id="PR:Q9LIA6"/>
<dbReference type="Proteomes" id="UP000006548">
    <property type="component" value="Chromosome 3"/>
</dbReference>
<dbReference type="ExpressionAtlas" id="Q9LIA6">
    <property type="expression patterns" value="baseline and differential"/>
</dbReference>
<dbReference type="GO" id="GO:0005634">
    <property type="term" value="C:nucleus"/>
    <property type="evidence" value="ECO:0000314"/>
    <property type="project" value="TAIR"/>
</dbReference>
<dbReference type="GO" id="GO:0017025">
    <property type="term" value="F:TBP-class protein binding"/>
    <property type="evidence" value="ECO:0007669"/>
    <property type="project" value="InterPro"/>
</dbReference>
<dbReference type="GO" id="GO:0008270">
    <property type="term" value="F:zinc ion binding"/>
    <property type="evidence" value="ECO:0007669"/>
    <property type="project" value="UniProtKB-KW"/>
</dbReference>
<dbReference type="GO" id="GO:0009960">
    <property type="term" value="P:endosperm development"/>
    <property type="evidence" value="ECO:0000315"/>
    <property type="project" value="TAIR"/>
</dbReference>
<dbReference type="GO" id="GO:0000769">
    <property type="term" value="P:syncytium formation by mitosis without cytokinesis"/>
    <property type="evidence" value="ECO:0000315"/>
    <property type="project" value="TAIR"/>
</dbReference>
<dbReference type="GO" id="GO:0070897">
    <property type="term" value="P:transcription preinitiation complex assembly"/>
    <property type="evidence" value="ECO:0007669"/>
    <property type="project" value="InterPro"/>
</dbReference>
<dbReference type="FunFam" id="1.10.472.170:FF:000001">
    <property type="entry name" value="Transcription initiation factor IIB"/>
    <property type="match status" value="1"/>
</dbReference>
<dbReference type="Gene3D" id="1.10.472.170">
    <property type="match status" value="1"/>
</dbReference>
<dbReference type="Gene3D" id="1.10.472.10">
    <property type="entry name" value="Cyclin-like"/>
    <property type="match status" value="1"/>
</dbReference>
<dbReference type="InterPro" id="IPR036915">
    <property type="entry name" value="Cyclin-like_sf"/>
</dbReference>
<dbReference type="InterPro" id="IPR000812">
    <property type="entry name" value="TFIIB"/>
</dbReference>
<dbReference type="InterPro" id="IPR013150">
    <property type="entry name" value="TFIIB_cyclin"/>
</dbReference>
<dbReference type="InterPro" id="IPR013137">
    <property type="entry name" value="Znf_TFIIB"/>
</dbReference>
<dbReference type="PANTHER" id="PTHR11618:SF75">
    <property type="entry name" value="PLANT-SPECIFIC TFIIB-RELATED PROTEIN 2-RELATED"/>
    <property type="match status" value="1"/>
</dbReference>
<dbReference type="PANTHER" id="PTHR11618">
    <property type="entry name" value="TRANSCRIPTION INITIATION FACTOR IIB-RELATED"/>
    <property type="match status" value="1"/>
</dbReference>
<dbReference type="Pfam" id="PF00382">
    <property type="entry name" value="TFIIB"/>
    <property type="match status" value="2"/>
</dbReference>
<dbReference type="Pfam" id="PF08271">
    <property type="entry name" value="Zn_Ribbon_TF"/>
    <property type="match status" value="1"/>
</dbReference>
<dbReference type="PRINTS" id="PR00685">
    <property type="entry name" value="TIFACTORIIB"/>
</dbReference>
<dbReference type="SUPFAM" id="SSF47954">
    <property type="entry name" value="Cyclin-like"/>
    <property type="match status" value="2"/>
</dbReference>
<dbReference type="SUPFAM" id="SSF57783">
    <property type="entry name" value="Zinc beta-ribbon"/>
    <property type="match status" value="1"/>
</dbReference>
<dbReference type="PROSITE" id="PS51134">
    <property type="entry name" value="ZF_TFIIB"/>
    <property type="match status" value="1"/>
</dbReference>
<evidence type="ECO:0000255" key="1">
    <source>
        <dbReference type="PROSITE-ProRule" id="PRU00469"/>
    </source>
</evidence>
<evidence type="ECO:0000269" key="2">
    <source>
    </source>
</evidence>
<evidence type="ECO:0000303" key="3">
    <source>
    </source>
</evidence>
<evidence type="ECO:0000305" key="4"/>
<evidence type="ECO:0000312" key="5">
    <source>
        <dbReference type="Araport" id="AT3G29380"/>
    </source>
</evidence>
<evidence type="ECO:0000312" key="6">
    <source>
        <dbReference type="EMBL" id="BAB02583.1"/>
    </source>
</evidence>
<proteinExistence type="evidence at transcript level"/>
<keyword id="KW-0479">Metal-binding</keyword>
<keyword id="KW-0539">Nucleus</keyword>
<keyword id="KW-1185">Reference proteome</keyword>
<keyword id="KW-0804">Transcription</keyword>
<keyword id="KW-0805">Transcription regulation</keyword>
<keyword id="KW-0862">Zinc</keyword>
<keyword id="KW-0863">Zinc-finger</keyword>
<comment type="function">
    <text evidence="2">Plant-specific TFIIB-related protein involved in the regulation of endosperm proliferation during the syncytial phase of endosperm development. Does not contribute to RNA polymerase IV or V activities in reproductive tissues.</text>
</comment>
<comment type="subcellular location">
    <subcellularLocation>
        <location evidence="2">Nucleus</location>
    </subcellularLocation>
</comment>
<comment type="tissue specificity">
    <text evidence="2">Specifically expressed in reproductive organs and seeds.</text>
</comment>
<comment type="disruption phenotype">
    <text evidence="2">No visible phenotype under normal growth conditions, but embryos of mutant plants display a reduced rate of endosperm proliferation during the syncytial phase of endosperm development.</text>
</comment>